<protein>
    <recommendedName>
        <fullName evidence="5">Monodehydroascorbate reductase 4, cytosolic</fullName>
        <shortName evidence="4">OsMADR4</shortName>
        <shortName evidence="4">OsMDHAR4</shortName>
        <ecNumber evidence="1">1.6.5.4</ecNumber>
    </recommendedName>
</protein>
<accession>Q6ZJ08</accession>
<accession>Q9SXX0</accession>
<proteinExistence type="evidence at protein level"/>
<reference key="1">
    <citation type="journal article" date="2005" name="Nature">
        <title>The map-based sequence of the rice genome.</title>
        <authorList>
            <consortium name="International rice genome sequencing project (IRGSP)"/>
        </authorList>
    </citation>
    <scope>NUCLEOTIDE SEQUENCE [LARGE SCALE GENOMIC DNA]</scope>
    <source>
        <strain>cv. Nipponbare</strain>
    </source>
</reference>
<reference key="2">
    <citation type="journal article" date="2008" name="Nucleic Acids Res.">
        <title>The rice annotation project database (RAP-DB): 2008 update.</title>
        <authorList>
            <consortium name="The rice annotation project (RAP)"/>
        </authorList>
    </citation>
    <scope>GENOME REANNOTATION</scope>
    <source>
        <strain>cv. Nipponbare</strain>
    </source>
</reference>
<reference key="3">
    <citation type="journal article" date="2013" name="Rice">
        <title>Improvement of the Oryza sativa Nipponbare reference genome using next generation sequence and optical map data.</title>
        <authorList>
            <person name="Kawahara Y."/>
            <person name="de la Bastide M."/>
            <person name="Hamilton J.P."/>
            <person name="Kanamori H."/>
            <person name="McCombie W.R."/>
            <person name="Ouyang S."/>
            <person name="Schwartz D.C."/>
            <person name="Tanaka T."/>
            <person name="Wu J."/>
            <person name="Zhou S."/>
            <person name="Childs K.L."/>
            <person name="Davidson R.M."/>
            <person name="Lin H."/>
            <person name="Quesada-Ocampo L."/>
            <person name="Vaillancourt B."/>
            <person name="Sakai H."/>
            <person name="Lee S.S."/>
            <person name="Kim J."/>
            <person name="Numa H."/>
            <person name="Itoh T."/>
            <person name="Buell C.R."/>
            <person name="Matsumoto T."/>
        </authorList>
    </citation>
    <scope>GENOME REANNOTATION</scope>
    <source>
        <strain>cv. Nipponbare</strain>
    </source>
</reference>
<reference key="4">
    <citation type="journal article" date="2003" name="Science">
        <title>Collection, mapping, and annotation of over 28,000 cDNA clones from japonica rice.</title>
        <authorList>
            <consortium name="The rice full-length cDNA consortium"/>
        </authorList>
    </citation>
    <scope>NUCLEOTIDE SEQUENCE [LARGE SCALE MRNA]</scope>
    <source>
        <strain>cv. Nipponbare</strain>
    </source>
</reference>
<reference key="5">
    <citation type="submission" date="1999-04" db="EMBL/GenBank/DDBJ databases">
        <title>Cloning and characterization of two cDNAs for cytosolic monodehydroascorbate reductase in rice.</title>
        <authorList>
            <person name="Kaminaka H."/>
            <person name="Morita S."/>
            <person name="Tokumoto M."/>
            <person name="Masumura T."/>
            <person name="Tanaka K."/>
        </authorList>
    </citation>
    <scope>NUCLEOTIDE SEQUENCE [MRNA] OF 1-398</scope>
</reference>
<reference key="6">
    <citation type="journal article" date="2006" name="Mol. Cell. Proteomics">
        <title>Low temperature treatment at the young microspore stage induces protein changes in rice anthers.</title>
        <authorList>
            <person name="Imin N."/>
            <person name="Kerim T."/>
            <person name="Weinman J.J."/>
            <person name="Rolfe B.G."/>
        </authorList>
    </citation>
    <scope>IDENTIFICATION BY MASS SPECTROMETRY</scope>
    <scope>TISSUE SPECIFICITY</scope>
    <scope>INDUCTION BY COLD</scope>
</reference>
<reference key="7">
    <citation type="journal article" date="2015" name="J. Plant Physiol.">
        <title>Transcriptional profile of genes involved in ascorbate glutathione cycle in senescing leaves for an early senescence leaf (esl) rice mutant.</title>
        <authorList>
            <person name="Li Z."/>
            <person name="Su D."/>
            <person name="Lei B."/>
            <person name="Wang F."/>
            <person name="Geng W."/>
            <person name="Pan G."/>
            <person name="Cheng F."/>
        </authorList>
    </citation>
    <scope>INDUCTION BY SENESCENCE</scope>
</reference>
<keyword id="KW-0963">Cytoplasm</keyword>
<keyword id="KW-0274">FAD</keyword>
<keyword id="KW-0285">Flavoprotein</keyword>
<keyword id="KW-0520">NAD</keyword>
<keyword id="KW-0521">NADP</keyword>
<keyword id="KW-0560">Oxidoreductase</keyword>
<keyword id="KW-0676">Redox-active center</keyword>
<keyword id="KW-1185">Reference proteome</keyword>
<sequence length="435" mass="46685">MAAAKHFTYVILGGGVAAGYAAREFAKQGVKPGELAIISKESVAPYERPALSKGYLFPQNAARLPGFHTCVGSGGERLLPEWYSEKGIELILSTEIVKADLASKTLTSSADATFTYDTLLIATGSSVIKLTDFGVQGAEANDILYLRDIEDADKLVAAMQAKKDGKAVIVGGGYIGLELSAALKTNNFDVTMVYPEPWCMPRLFTSGLAAFYEGYYANKGIHIIKGTVAVGFDADANGDVTAVKLKNGNVLEADIVIVGVGGRPLTHLFKGQVAEEKGGIKTDAFFETSVPGVYAIADVAAFPMKLYNEIRRVEHVDHARKSAEQAVKAIKAKEAGESVPEYDYLPYFYSRSFDLSWQFYGDNVGEDVLFGDNDPTAAKPKFGSYWIKDGKVVGVFLEGGSAEENQVIAKVARAQPPVADVEALKKEGLDFAAKV</sequence>
<dbReference type="EC" id="1.6.5.4" evidence="1"/>
<dbReference type="EMBL" id="AP003928">
    <property type="protein sequence ID" value="BAD09086.1"/>
    <property type="molecule type" value="Genomic_DNA"/>
</dbReference>
<dbReference type="EMBL" id="AP008214">
    <property type="protein sequence ID" value="BAF24400.1"/>
    <property type="molecule type" value="Genomic_DNA"/>
</dbReference>
<dbReference type="EMBL" id="AP014964">
    <property type="protein sequence ID" value="BAT06666.1"/>
    <property type="molecule type" value="Genomic_DNA"/>
</dbReference>
<dbReference type="EMBL" id="AK102459">
    <property type="protein sequence ID" value="BAG95564.1"/>
    <property type="molecule type" value="mRNA"/>
</dbReference>
<dbReference type="EMBL" id="AB026731">
    <property type="protein sequence ID" value="BAA77282.1"/>
    <property type="molecule type" value="mRNA"/>
</dbReference>
<dbReference type="RefSeq" id="XP_015649937.1">
    <property type="nucleotide sequence ID" value="XM_015794451.1"/>
</dbReference>
<dbReference type="SMR" id="Q6ZJ08"/>
<dbReference type="FunCoup" id="Q6ZJ08">
    <property type="interactions" value="2046"/>
</dbReference>
<dbReference type="STRING" id="39947.Q6ZJ08"/>
<dbReference type="PaxDb" id="39947-Q6ZJ08"/>
<dbReference type="EnsemblPlants" id="Os08t0557600-01">
    <property type="protein sequence ID" value="Os08t0557600-01"/>
    <property type="gene ID" value="Os08g0557600"/>
</dbReference>
<dbReference type="Gramene" id="Os08t0557600-01">
    <property type="protein sequence ID" value="Os08t0557600-01"/>
    <property type="gene ID" value="Os08g0557600"/>
</dbReference>
<dbReference type="KEGG" id="dosa:Os08g0557600"/>
<dbReference type="eggNOG" id="KOG1336">
    <property type="taxonomic scope" value="Eukaryota"/>
</dbReference>
<dbReference type="HOGENOM" id="CLU_003291_4_1_1"/>
<dbReference type="InParanoid" id="Q6ZJ08"/>
<dbReference type="OMA" id="IHHFWTF"/>
<dbReference type="OrthoDB" id="432169at2759"/>
<dbReference type="Proteomes" id="UP000000763">
    <property type="component" value="Chromosome 8"/>
</dbReference>
<dbReference type="Proteomes" id="UP000059680">
    <property type="component" value="Chromosome 8"/>
</dbReference>
<dbReference type="ExpressionAtlas" id="Q6ZJ08">
    <property type="expression patterns" value="baseline and differential"/>
</dbReference>
<dbReference type="GO" id="GO:0005737">
    <property type="term" value="C:cytoplasm"/>
    <property type="evidence" value="ECO:0000318"/>
    <property type="project" value="GO_Central"/>
</dbReference>
<dbReference type="GO" id="GO:0016656">
    <property type="term" value="F:monodehydroascorbate reductase (NADH) activity"/>
    <property type="evidence" value="ECO:0007669"/>
    <property type="project" value="UniProtKB-EC"/>
</dbReference>
<dbReference type="GO" id="GO:0016651">
    <property type="term" value="F:oxidoreductase activity, acting on NAD(P)H"/>
    <property type="evidence" value="ECO:0000318"/>
    <property type="project" value="GO_Central"/>
</dbReference>
<dbReference type="FunFam" id="3.30.390.30:FF:000013">
    <property type="entry name" value="Monodehydroascorbate reductase 3"/>
    <property type="match status" value="1"/>
</dbReference>
<dbReference type="FunFam" id="3.50.50.60:FF:000155">
    <property type="entry name" value="Monodehydroascorbate reductase 3"/>
    <property type="match status" value="1"/>
</dbReference>
<dbReference type="Gene3D" id="3.30.390.30">
    <property type="match status" value="1"/>
</dbReference>
<dbReference type="Gene3D" id="3.50.50.60">
    <property type="entry name" value="FAD/NAD(P)-binding domain"/>
    <property type="match status" value="2"/>
</dbReference>
<dbReference type="InterPro" id="IPR050446">
    <property type="entry name" value="FAD-oxidoreductase/Apoptosis"/>
</dbReference>
<dbReference type="InterPro" id="IPR036188">
    <property type="entry name" value="FAD/NAD-bd_sf"/>
</dbReference>
<dbReference type="InterPro" id="IPR023753">
    <property type="entry name" value="FAD/NAD-binding_dom"/>
</dbReference>
<dbReference type="InterPro" id="IPR016156">
    <property type="entry name" value="FAD/NAD-linked_Rdtase_dimer_sf"/>
</dbReference>
<dbReference type="InterPro" id="IPR048618">
    <property type="entry name" value="MDHAR3-like_C"/>
</dbReference>
<dbReference type="PANTHER" id="PTHR43557">
    <property type="entry name" value="APOPTOSIS-INDUCING FACTOR 1"/>
    <property type="match status" value="1"/>
</dbReference>
<dbReference type="PANTHER" id="PTHR43557:SF17">
    <property type="entry name" value="MONODEHYDROASCORBATE REDUCTASE 4, CYTOSOLIC"/>
    <property type="match status" value="1"/>
</dbReference>
<dbReference type="Pfam" id="PF21791">
    <property type="entry name" value="MDHAR3-like_C"/>
    <property type="match status" value="1"/>
</dbReference>
<dbReference type="Pfam" id="PF07992">
    <property type="entry name" value="Pyr_redox_2"/>
    <property type="match status" value="1"/>
</dbReference>
<dbReference type="PRINTS" id="PR00368">
    <property type="entry name" value="FADPNR"/>
</dbReference>
<dbReference type="PRINTS" id="PR00411">
    <property type="entry name" value="PNDRDTASEI"/>
</dbReference>
<dbReference type="SUPFAM" id="SSF51905">
    <property type="entry name" value="FAD/NAD(P)-binding domain"/>
    <property type="match status" value="2"/>
</dbReference>
<dbReference type="SUPFAM" id="SSF55424">
    <property type="entry name" value="FAD/NAD-linked reductases, dimerisation (C-terminal) domain"/>
    <property type="match status" value="1"/>
</dbReference>
<comment type="function">
    <text evidence="1">Catalyzes the conversion of monodehydroascorbate to ascorbate, oxidizing NADH in the process. Ascorbate is a major antioxidant against reactive oxygen species (ROS) and nitric oxide (NO).</text>
</comment>
<comment type="catalytic activity">
    <reaction evidence="1">
        <text>2 monodehydro-L-ascorbate radical + NADH + H(+) = 2 L-ascorbate + NAD(+)</text>
        <dbReference type="Rhea" id="RHEA:14581"/>
        <dbReference type="ChEBI" id="CHEBI:15378"/>
        <dbReference type="ChEBI" id="CHEBI:38290"/>
        <dbReference type="ChEBI" id="CHEBI:57540"/>
        <dbReference type="ChEBI" id="CHEBI:57945"/>
        <dbReference type="ChEBI" id="CHEBI:59513"/>
        <dbReference type="EC" id="1.6.5.4"/>
    </reaction>
</comment>
<comment type="cofactor">
    <cofactor evidence="1">
        <name>FAD</name>
        <dbReference type="ChEBI" id="CHEBI:57692"/>
    </cofactor>
</comment>
<comment type="subcellular location">
    <subcellularLocation>
        <location evidence="5">Cytoplasm</location>
    </subcellularLocation>
</comment>
<comment type="tissue specificity">
    <text evidence="2">Expressed in anthers.</text>
</comment>
<comment type="induction">
    <text evidence="2 3">Induced by cold stress (PubMed:16263700). Induced during senescence (PubMed:25546583).</text>
</comment>
<comment type="similarity">
    <text evidence="5">Belongs to the FAD-dependent oxidoreductase family.</text>
</comment>
<evidence type="ECO:0000250" key="1">
    <source>
        <dbReference type="UniProtKB" id="Q652L6"/>
    </source>
</evidence>
<evidence type="ECO:0000269" key="2">
    <source>
    </source>
</evidence>
<evidence type="ECO:0000269" key="3">
    <source>
    </source>
</evidence>
<evidence type="ECO:0000303" key="4">
    <source>
    </source>
</evidence>
<evidence type="ECO:0000305" key="5"/>
<evidence type="ECO:0000312" key="6">
    <source>
        <dbReference type="EMBL" id="BAD09086.1"/>
    </source>
</evidence>
<evidence type="ECO:0000312" key="7">
    <source>
        <dbReference type="EMBL" id="BAF24400.1"/>
    </source>
</evidence>
<name>MDAR4_ORYSJ</name>
<organism>
    <name type="scientific">Oryza sativa subsp. japonica</name>
    <name type="common">Rice</name>
    <dbReference type="NCBI Taxonomy" id="39947"/>
    <lineage>
        <taxon>Eukaryota</taxon>
        <taxon>Viridiplantae</taxon>
        <taxon>Streptophyta</taxon>
        <taxon>Embryophyta</taxon>
        <taxon>Tracheophyta</taxon>
        <taxon>Spermatophyta</taxon>
        <taxon>Magnoliopsida</taxon>
        <taxon>Liliopsida</taxon>
        <taxon>Poales</taxon>
        <taxon>Poaceae</taxon>
        <taxon>BOP clade</taxon>
        <taxon>Oryzoideae</taxon>
        <taxon>Oryzeae</taxon>
        <taxon>Oryzinae</taxon>
        <taxon>Oryza</taxon>
        <taxon>Oryza sativa</taxon>
    </lineage>
</organism>
<feature type="chain" id="PRO_0000442022" description="Monodehydroascorbate reductase 4, cytosolic">
    <location>
        <begin position="1"/>
        <end position="435"/>
    </location>
</feature>
<feature type="binding site" evidence="1">
    <location>
        <begin position="14"/>
        <end position="17"/>
    </location>
    <ligand>
        <name>FAD</name>
        <dbReference type="ChEBI" id="CHEBI:57692"/>
    </ligand>
</feature>
<feature type="binding site" evidence="1">
    <location>
        <position position="41"/>
    </location>
    <ligand>
        <name>FAD</name>
        <dbReference type="ChEBI" id="CHEBI:57692"/>
    </ligand>
</feature>
<feature type="binding site" evidence="1">
    <location>
        <position position="48"/>
    </location>
    <ligand>
        <name>FAD</name>
        <dbReference type="ChEBI" id="CHEBI:57692"/>
    </ligand>
</feature>
<feature type="binding site" evidence="1">
    <location>
        <position position="53"/>
    </location>
    <ligand>
        <name>FAD</name>
        <dbReference type="ChEBI" id="CHEBI:57692"/>
    </ligand>
</feature>
<feature type="binding site" evidence="1">
    <location>
        <position position="96"/>
    </location>
    <ligand>
        <name>FAD</name>
        <dbReference type="ChEBI" id="CHEBI:57692"/>
    </ligand>
</feature>
<feature type="binding site" evidence="1">
    <location>
        <begin position="147"/>
        <end position="148"/>
    </location>
    <ligand>
        <name>FAD</name>
        <dbReference type="ChEBI" id="CHEBI:57692"/>
    </ligand>
</feature>
<feature type="binding site" evidence="1">
    <location>
        <begin position="172"/>
        <end position="178"/>
    </location>
    <ligand>
        <name>NAD(+)</name>
        <dbReference type="ChEBI" id="CHEBI:57540"/>
    </ligand>
</feature>
<feature type="binding site" evidence="1">
    <location>
        <begin position="174"/>
        <end position="178"/>
    </location>
    <ligand>
        <name>NADP(+)</name>
        <dbReference type="ChEBI" id="CHEBI:58349"/>
    </ligand>
</feature>
<feature type="binding site" evidence="1">
    <location>
        <position position="196"/>
    </location>
    <ligand>
        <name>NAD(+)</name>
        <dbReference type="ChEBI" id="CHEBI:57540"/>
    </ligand>
</feature>
<feature type="binding site" evidence="1">
    <location>
        <position position="202"/>
    </location>
    <ligand>
        <name>NAD(+)</name>
        <dbReference type="ChEBI" id="CHEBI:57540"/>
    </ligand>
</feature>
<feature type="binding site" evidence="1">
    <location>
        <position position="202"/>
    </location>
    <ligand>
        <name>NADP(+)</name>
        <dbReference type="ChEBI" id="CHEBI:58349"/>
    </ligand>
</feature>
<feature type="binding site" evidence="1">
    <location>
        <position position="261"/>
    </location>
    <ligand>
        <name>NAD(+)</name>
        <dbReference type="ChEBI" id="CHEBI:57540"/>
    </ligand>
</feature>
<feature type="binding site" evidence="1">
    <location>
        <position position="261"/>
    </location>
    <ligand>
        <name>NADP(+)</name>
        <dbReference type="ChEBI" id="CHEBI:58349"/>
    </ligand>
</feature>
<feature type="binding site" evidence="1">
    <location>
        <position position="298"/>
    </location>
    <ligand>
        <name>FAD</name>
        <dbReference type="ChEBI" id="CHEBI:57692"/>
    </ligand>
</feature>
<feature type="binding site" evidence="1">
    <location>
        <begin position="314"/>
        <end position="315"/>
    </location>
    <ligand>
        <name>NAD(+)</name>
        <dbReference type="ChEBI" id="CHEBI:57540"/>
    </ligand>
</feature>
<feature type="binding site" evidence="1">
    <location>
        <begin position="314"/>
        <end position="315"/>
    </location>
    <ligand>
        <name>NADP(+)</name>
        <dbReference type="ChEBI" id="CHEBI:58349"/>
    </ligand>
</feature>
<feature type="binding site" evidence="1">
    <location>
        <position position="316"/>
    </location>
    <ligand>
        <name>FAD</name>
        <dbReference type="ChEBI" id="CHEBI:57692"/>
    </ligand>
</feature>
<feature type="binding site" evidence="1">
    <location>
        <position position="320"/>
    </location>
    <ligand>
        <name>L-ascorbate</name>
        <dbReference type="ChEBI" id="CHEBI:38290"/>
    </ligand>
</feature>
<feature type="binding site" evidence="1">
    <location>
        <position position="349"/>
    </location>
    <ligand>
        <name>FAD</name>
        <dbReference type="ChEBI" id="CHEBI:57692"/>
    </ligand>
</feature>
<feature type="binding site" evidence="1">
    <location>
        <position position="349"/>
    </location>
    <ligand>
        <name>NAD(+)</name>
        <dbReference type="ChEBI" id="CHEBI:57540"/>
    </ligand>
</feature>
<feature type="binding site" evidence="1">
    <location>
        <position position="349"/>
    </location>
    <ligand>
        <name>NADP(+)</name>
        <dbReference type="ChEBI" id="CHEBI:58349"/>
    </ligand>
</feature>
<feature type="binding site" evidence="1">
    <location>
        <position position="351"/>
    </location>
    <ligand>
        <name>L-ascorbate</name>
        <dbReference type="ChEBI" id="CHEBI:38290"/>
    </ligand>
</feature>
<feature type="sequence conflict" description="In Ref. 5; BAA77282." evidence="5" ref="5">
    <original>S</original>
    <variation>F</variation>
    <location>
        <position position="125"/>
    </location>
</feature>
<gene>
    <name evidence="4" type="primary">MDAR4</name>
    <name evidence="4" type="synonym">MDHAR4</name>
    <name evidence="7" type="ordered locus">Os08g0557600</name>
    <name evidence="5" type="ordered locus">LOC_Os08g44340</name>
    <name evidence="6" type="ORF">OJ1150_A11.25</name>
</gene>